<gene>
    <name evidence="1" type="primary">miaA</name>
    <name type="ordered locus">Bcep18194_A3852</name>
</gene>
<proteinExistence type="inferred from homology"/>
<keyword id="KW-0067">ATP-binding</keyword>
<keyword id="KW-0460">Magnesium</keyword>
<keyword id="KW-0547">Nucleotide-binding</keyword>
<keyword id="KW-0808">Transferase</keyword>
<keyword id="KW-0819">tRNA processing</keyword>
<dbReference type="EC" id="2.5.1.75" evidence="1"/>
<dbReference type="EMBL" id="CP000151">
    <property type="protein sequence ID" value="ABB07451.1"/>
    <property type="molecule type" value="Genomic_DNA"/>
</dbReference>
<dbReference type="RefSeq" id="WP_011351036.1">
    <property type="nucleotide sequence ID" value="NC_007510.1"/>
</dbReference>
<dbReference type="SMR" id="Q39JB5"/>
<dbReference type="GeneID" id="45093763"/>
<dbReference type="KEGG" id="bur:Bcep18194_A3852"/>
<dbReference type="PATRIC" id="fig|482957.22.peg.720"/>
<dbReference type="HOGENOM" id="CLU_032616_0_0_4"/>
<dbReference type="Proteomes" id="UP000002705">
    <property type="component" value="Chromosome 1"/>
</dbReference>
<dbReference type="GO" id="GO:0005524">
    <property type="term" value="F:ATP binding"/>
    <property type="evidence" value="ECO:0007669"/>
    <property type="project" value="UniProtKB-UniRule"/>
</dbReference>
<dbReference type="GO" id="GO:0052381">
    <property type="term" value="F:tRNA dimethylallyltransferase activity"/>
    <property type="evidence" value="ECO:0007669"/>
    <property type="project" value="UniProtKB-UniRule"/>
</dbReference>
<dbReference type="GO" id="GO:0006400">
    <property type="term" value="P:tRNA modification"/>
    <property type="evidence" value="ECO:0007669"/>
    <property type="project" value="TreeGrafter"/>
</dbReference>
<dbReference type="FunFam" id="1.10.20.140:FF:000001">
    <property type="entry name" value="tRNA dimethylallyltransferase"/>
    <property type="match status" value="1"/>
</dbReference>
<dbReference type="Gene3D" id="1.10.20.140">
    <property type="match status" value="1"/>
</dbReference>
<dbReference type="Gene3D" id="3.40.50.300">
    <property type="entry name" value="P-loop containing nucleotide triphosphate hydrolases"/>
    <property type="match status" value="1"/>
</dbReference>
<dbReference type="HAMAP" id="MF_00185">
    <property type="entry name" value="IPP_trans"/>
    <property type="match status" value="1"/>
</dbReference>
<dbReference type="InterPro" id="IPR039657">
    <property type="entry name" value="Dimethylallyltransferase"/>
</dbReference>
<dbReference type="InterPro" id="IPR018022">
    <property type="entry name" value="IPT"/>
</dbReference>
<dbReference type="InterPro" id="IPR027417">
    <property type="entry name" value="P-loop_NTPase"/>
</dbReference>
<dbReference type="NCBIfam" id="TIGR00174">
    <property type="entry name" value="miaA"/>
    <property type="match status" value="1"/>
</dbReference>
<dbReference type="PANTHER" id="PTHR11088">
    <property type="entry name" value="TRNA DIMETHYLALLYLTRANSFERASE"/>
    <property type="match status" value="1"/>
</dbReference>
<dbReference type="PANTHER" id="PTHR11088:SF60">
    <property type="entry name" value="TRNA DIMETHYLALLYLTRANSFERASE"/>
    <property type="match status" value="1"/>
</dbReference>
<dbReference type="Pfam" id="PF01715">
    <property type="entry name" value="IPPT"/>
    <property type="match status" value="1"/>
</dbReference>
<dbReference type="SUPFAM" id="SSF52540">
    <property type="entry name" value="P-loop containing nucleoside triphosphate hydrolases"/>
    <property type="match status" value="2"/>
</dbReference>
<protein>
    <recommendedName>
        <fullName evidence="1">tRNA dimethylallyltransferase</fullName>
        <ecNumber evidence="1">2.5.1.75</ecNumber>
    </recommendedName>
    <alternativeName>
        <fullName evidence="1">Dimethylallyl diphosphate:tRNA dimethylallyltransferase</fullName>
        <shortName evidence="1">DMAPP:tRNA dimethylallyltransferase</shortName>
        <shortName evidence="1">DMATase</shortName>
    </alternativeName>
    <alternativeName>
        <fullName evidence="1">Isopentenyl-diphosphate:tRNA isopentenyltransferase</fullName>
        <shortName evidence="1">IPP transferase</shortName>
        <shortName evidence="1">IPPT</shortName>
        <shortName evidence="1">IPTase</shortName>
    </alternativeName>
</protein>
<sequence length="324" mass="35403">MSAAPHASPTTIACLLGPTASGKTAAALALAARRPIEIVSVDSALVYRDMDIGTAKPSRDERASVPHHLIDIIDPADAYSAASFRADTLRLIGEIAARGRTPLLAGGTMLYYKALTQGLNDLPGADPDVRATLDAEAERDGWPALHARLAQVDPDTAARLAPNDSQRIQRALEVFMLSGQPMSVLLAAPRRTDDAAAAYRFVPVALEPSDRAVLHKRIAQRFDAMLDAGFIDEVERLRRREDLHPDLPSMRCVGYRQAWEFLDGDTDYRTMRDKGIFATRQLCKRQITWLRAMPERIVVDCIAPDSTARALDALERVLDGSTPG</sequence>
<comment type="function">
    <text evidence="1">Catalyzes the transfer of a dimethylallyl group onto the adenine at position 37 in tRNAs that read codons beginning with uridine, leading to the formation of N6-(dimethylallyl)adenosine (i(6)A).</text>
</comment>
<comment type="catalytic activity">
    <reaction evidence="1">
        <text>adenosine(37) in tRNA + dimethylallyl diphosphate = N(6)-dimethylallyladenosine(37) in tRNA + diphosphate</text>
        <dbReference type="Rhea" id="RHEA:26482"/>
        <dbReference type="Rhea" id="RHEA-COMP:10162"/>
        <dbReference type="Rhea" id="RHEA-COMP:10375"/>
        <dbReference type="ChEBI" id="CHEBI:33019"/>
        <dbReference type="ChEBI" id="CHEBI:57623"/>
        <dbReference type="ChEBI" id="CHEBI:74411"/>
        <dbReference type="ChEBI" id="CHEBI:74415"/>
        <dbReference type="EC" id="2.5.1.75"/>
    </reaction>
</comment>
<comment type="cofactor">
    <cofactor evidence="1">
        <name>Mg(2+)</name>
        <dbReference type="ChEBI" id="CHEBI:18420"/>
    </cofactor>
</comment>
<comment type="subunit">
    <text evidence="1">Monomer.</text>
</comment>
<comment type="similarity">
    <text evidence="1">Belongs to the IPP transferase family.</text>
</comment>
<evidence type="ECO:0000255" key="1">
    <source>
        <dbReference type="HAMAP-Rule" id="MF_00185"/>
    </source>
</evidence>
<name>MIAA_BURL3</name>
<feature type="chain" id="PRO_1000020578" description="tRNA dimethylallyltransferase">
    <location>
        <begin position="1"/>
        <end position="324"/>
    </location>
</feature>
<feature type="region of interest" description="Interaction with substrate tRNA" evidence="1">
    <location>
        <begin position="42"/>
        <end position="45"/>
    </location>
</feature>
<feature type="region of interest" description="Interaction with substrate tRNA" evidence="1">
    <location>
        <begin position="166"/>
        <end position="170"/>
    </location>
</feature>
<feature type="region of interest" description="Interaction with substrate tRNA" evidence="1">
    <location>
        <begin position="251"/>
        <end position="256"/>
    </location>
</feature>
<feature type="region of interest" description="Interaction with substrate tRNA" evidence="1">
    <location>
        <begin position="284"/>
        <end position="291"/>
    </location>
</feature>
<feature type="binding site" evidence="1">
    <location>
        <begin position="17"/>
        <end position="24"/>
    </location>
    <ligand>
        <name>ATP</name>
        <dbReference type="ChEBI" id="CHEBI:30616"/>
    </ligand>
</feature>
<feature type="binding site" evidence="1">
    <location>
        <begin position="19"/>
        <end position="24"/>
    </location>
    <ligand>
        <name>substrate</name>
    </ligand>
</feature>
<feature type="site" description="Interaction with substrate tRNA" evidence="1">
    <location>
        <position position="108"/>
    </location>
</feature>
<feature type="site" description="Interaction with substrate tRNA" evidence="1">
    <location>
        <position position="130"/>
    </location>
</feature>
<reference key="1">
    <citation type="submission" date="2005-10" db="EMBL/GenBank/DDBJ databases">
        <title>Complete sequence of chromosome 1 of Burkholderia sp. 383.</title>
        <authorList>
            <consortium name="US DOE Joint Genome Institute"/>
            <person name="Copeland A."/>
            <person name="Lucas S."/>
            <person name="Lapidus A."/>
            <person name="Barry K."/>
            <person name="Detter J.C."/>
            <person name="Glavina T."/>
            <person name="Hammon N."/>
            <person name="Israni S."/>
            <person name="Pitluck S."/>
            <person name="Chain P."/>
            <person name="Malfatti S."/>
            <person name="Shin M."/>
            <person name="Vergez L."/>
            <person name="Schmutz J."/>
            <person name="Larimer F."/>
            <person name="Land M."/>
            <person name="Kyrpides N."/>
            <person name="Lykidis A."/>
            <person name="Richardson P."/>
        </authorList>
    </citation>
    <scope>NUCLEOTIDE SEQUENCE [LARGE SCALE GENOMIC DNA]</scope>
    <source>
        <strain>ATCC 17760 / DSM 23089 / LMG 22485 / NCIMB 9086 / R18194 / 383</strain>
    </source>
</reference>
<organism>
    <name type="scientific">Burkholderia lata (strain ATCC 17760 / DSM 23089 / LMG 22485 / NCIMB 9086 / R18194 / 383)</name>
    <dbReference type="NCBI Taxonomy" id="482957"/>
    <lineage>
        <taxon>Bacteria</taxon>
        <taxon>Pseudomonadati</taxon>
        <taxon>Pseudomonadota</taxon>
        <taxon>Betaproteobacteria</taxon>
        <taxon>Burkholderiales</taxon>
        <taxon>Burkholderiaceae</taxon>
        <taxon>Burkholderia</taxon>
        <taxon>Burkholderia cepacia complex</taxon>
    </lineage>
</organism>
<accession>Q39JB5</accession>